<gene>
    <name type="primary">CYP17A1</name>
    <name type="synonym">CYP17</name>
</gene>
<evidence type="ECO:0000250" key="1"/>
<evidence type="ECO:0000250" key="2">
    <source>
        <dbReference type="UniProtKB" id="P05093"/>
    </source>
</evidence>
<evidence type="ECO:0000305" key="3"/>
<keyword id="KW-0256">Endoplasmic reticulum</keyword>
<keyword id="KW-0349">Heme</keyword>
<keyword id="KW-0408">Iron</keyword>
<keyword id="KW-0443">Lipid metabolism</keyword>
<keyword id="KW-0456">Lyase</keyword>
<keyword id="KW-0472">Membrane</keyword>
<keyword id="KW-0479">Metal-binding</keyword>
<keyword id="KW-0492">Microsome</keyword>
<keyword id="KW-0503">Monooxygenase</keyword>
<keyword id="KW-0560">Oxidoreductase</keyword>
<keyword id="KW-0755">Steroidogenesis</keyword>
<organism>
    <name type="scientific">Bison bison</name>
    <name type="common">American bison</name>
    <name type="synonym">Bos bison</name>
    <dbReference type="NCBI Taxonomy" id="9901"/>
    <lineage>
        <taxon>Eukaryota</taxon>
        <taxon>Metazoa</taxon>
        <taxon>Chordata</taxon>
        <taxon>Craniata</taxon>
        <taxon>Vertebrata</taxon>
        <taxon>Euteleostomi</taxon>
        <taxon>Mammalia</taxon>
        <taxon>Eutheria</taxon>
        <taxon>Laurasiatheria</taxon>
        <taxon>Artiodactyla</taxon>
        <taxon>Ruminantia</taxon>
        <taxon>Pecora</taxon>
        <taxon>Bovidae</taxon>
        <taxon>Bovinae</taxon>
        <taxon>Bison</taxon>
    </lineage>
</organism>
<proteinExistence type="evidence at transcript level"/>
<dbReference type="EC" id="1.14.14.19" evidence="2"/>
<dbReference type="EC" id="1.14.14.32" evidence="2"/>
<dbReference type="EMBL" id="AF292565">
    <property type="protein sequence ID" value="AAG02227.1"/>
    <property type="molecule type" value="mRNA"/>
</dbReference>
<dbReference type="SMR" id="Q9GMC7"/>
<dbReference type="KEGG" id="ag:AAG02227"/>
<dbReference type="UniPathway" id="UPA00788"/>
<dbReference type="GO" id="GO:0005789">
    <property type="term" value="C:endoplasmic reticulum membrane"/>
    <property type="evidence" value="ECO:0007669"/>
    <property type="project" value="UniProtKB-SubCell"/>
</dbReference>
<dbReference type="GO" id="GO:0020037">
    <property type="term" value="F:heme binding"/>
    <property type="evidence" value="ECO:0000250"/>
    <property type="project" value="UniProtKB"/>
</dbReference>
<dbReference type="GO" id="GO:0005506">
    <property type="term" value="F:iron ion binding"/>
    <property type="evidence" value="ECO:0007669"/>
    <property type="project" value="InterPro"/>
</dbReference>
<dbReference type="GO" id="GO:0016829">
    <property type="term" value="F:lyase activity"/>
    <property type="evidence" value="ECO:0007669"/>
    <property type="project" value="UniProtKB-KW"/>
</dbReference>
<dbReference type="GO" id="GO:0004508">
    <property type="term" value="F:steroid 17-alpha-monooxygenase activity"/>
    <property type="evidence" value="ECO:0000250"/>
    <property type="project" value="UniProtKB"/>
</dbReference>
<dbReference type="GO" id="GO:0006704">
    <property type="term" value="P:glucocorticoid biosynthetic process"/>
    <property type="evidence" value="ECO:0007669"/>
    <property type="project" value="UniProtKB-UniPathway"/>
</dbReference>
<dbReference type="GO" id="GO:0042446">
    <property type="term" value="P:hormone biosynthetic process"/>
    <property type="evidence" value="ECO:0000250"/>
    <property type="project" value="UniProtKB"/>
</dbReference>
<dbReference type="GO" id="GO:0042448">
    <property type="term" value="P:progesterone metabolic process"/>
    <property type="evidence" value="ECO:0000250"/>
    <property type="project" value="UniProtKB"/>
</dbReference>
<dbReference type="GO" id="GO:0008202">
    <property type="term" value="P:steroid metabolic process"/>
    <property type="evidence" value="ECO:0000250"/>
    <property type="project" value="UniProtKB"/>
</dbReference>
<dbReference type="CDD" id="cd20673">
    <property type="entry name" value="CYP17A1"/>
    <property type="match status" value="1"/>
</dbReference>
<dbReference type="FunFam" id="1.10.630.10:FF:000002">
    <property type="entry name" value="Cytochrome P450 1A1"/>
    <property type="match status" value="1"/>
</dbReference>
<dbReference type="Gene3D" id="1.10.630.10">
    <property type="entry name" value="Cytochrome P450"/>
    <property type="match status" value="1"/>
</dbReference>
<dbReference type="InterPro" id="IPR001128">
    <property type="entry name" value="Cyt_P450"/>
</dbReference>
<dbReference type="InterPro" id="IPR017972">
    <property type="entry name" value="Cyt_P450_CS"/>
</dbReference>
<dbReference type="InterPro" id="IPR002401">
    <property type="entry name" value="Cyt_P450_E_grp-I"/>
</dbReference>
<dbReference type="InterPro" id="IPR036396">
    <property type="entry name" value="Cyt_P450_sf"/>
</dbReference>
<dbReference type="PANTHER" id="PTHR24289">
    <property type="entry name" value="STEROID 17-ALPHA-HYDROXYLASE/17,20 LYASE"/>
    <property type="match status" value="1"/>
</dbReference>
<dbReference type="PANTHER" id="PTHR24289:SF13">
    <property type="entry name" value="STEROID 17-ALPHA-HYDROXYLASE_17,20 LYASE"/>
    <property type="match status" value="1"/>
</dbReference>
<dbReference type="Pfam" id="PF00067">
    <property type="entry name" value="p450"/>
    <property type="match status" value="1"/>
</dbReference>
<dbReference type="PRINTS" id="PR00463">
    <property type="entry name" value="EP450I"/>
</dbReference>
<dbReference type="PRINTS" id="PR00385">
    <property type="entry name" value="P450"/>
</dbReference>
<dbReference type="SUPFAM" id="SSF48264">
    <property type="entry name" value="Cytochrome P450"/>
    <property type="match status" value="1"/>
</dbReference>
<dbReference type="PROSITE" id="PS00086">
    <property type="entry name" value="CYTOCHROME_P450"/>
    <property type="match status" value="1"/>
</dbReference>
<feature type="chain" id="PRO_0000051925" description="Steroid 17-alpha-hydroxylase/17,20 lyase">
    <location>
        <begin position="1"/>
        <end position="509"/>
    </location>
</feature>
<feature type="binding site" evidence="2">
    <location>
        <position position="202"/>
    </location>
    <ligand>
        <name>substrate</name>
    </ligand>
</feature>
<feature type="binding site" description="axial binding residue" evidence="1">
    <location>
        <position position="442"/>
    </location>
    <ligand>
        <name>heme</name>
        <dbReference type="ChEBI" id="CHEBI:30413"/>
    </ligand>
    <ligandPart>
        <name>Fe</name>
        <dbReference type="ChEBI" id="CHEBI:18248"/>
    </ligandPart>
</feature>
<protein>
    <recommendedName>
        <fullName>Steroid 17-alpha-hydroxylase/17,20 lyase</fullName>
        <ecNumber evidence="2">1.14.14.19</ecNumber>
    </recommendedName>
    <alternativeName>
        <fullName>17-alpha-hydroxyprogesterone aldolase</fullName>
        <ecNumber evidence="2">1.14.14.32</ecNumber>
    </alternativeName>
    <alternativeName>
        <fullName>CYPXVII</fullName>
    </alternativeName>
    <alternativeName>
        <fullName>Cytochrome P450 17A1</fullName>
    </alternativeName>
    <alternativeName>
        <fullName>Cytochrome P450-C17</fullName>
        <shortName>Cytochrome P450c17</shortName>
    </alternativeName>
    <alternativeName>
        <fullName>Steroid 17-alpha-monooxygenase</fullName>
    </alternativeName>
</protein>
<reference key="1">
    <citation type="journal article" date="2003" name="Biochemistry (Mosc.)">
        <title>Molecular cloning and heterologous expression in E. coli of cytochrome P45017alpha. Comparison of structural and functional properties of substrate-specific cytochromes P450 from different species.</title>
        <authorList>
            <person name="Gilep A.A."/>
            <person name="Estabrook R.W."/>
            <person name="Usanov S.A."/>
        </authorList>
    </citation>
    <scope>NUCLEOTIDE SEQUENCE [MRNA]</scope>
    <source>
        <tissue>Adrenal gland</tissue>
    </source>
</reference>
<accession>Q9GMC7</accession>
<name>CP17A_BISBI</name>
<comment type="function">
    <text evidence="2">A cytochrome P450 monooxygenase involved in corticoid and androgen biosynthesis. Catalyzes 17-alpha hydroxylation of C21 steroids, which is common for both pathways. A second oxidative step, required only for androgen synthesis, involves an acyl-carbon cleavage. The 17-alpha hydroxy intermediates, as part of adrenal glucocorticoids biosynthesis pathway, are precursors of cortisol. Hydroxylates steroid hormones, pregnenolone and progesterone to form 17-alpha hydroxy metabolites, followed by the cleavage of the C17-C20 bond to form C19 steroids, dehydroepiandrosterone (DHEA) and androstenedione. Has 16-alpha hydroxylase activity. Catalyzes 16-alpha hydroxylation of 17-alpha hydroxy pregnenolone, followed by the cleavage of the C17-C20 bond to form 16-alpha-hydroxy DHEA. Also 16-alpha hydroxylates androgens, relevant for estriol synthesis. Mechanistically, uses molecular oxygen inserting one oxygen atom into a substrate, and reducing the second into a water molecule, with two electrons provided by NADPH via cytochrome P450 reductase (CPR; NADPH-ferrihemoprotein reductase).</text>
</comment>
<comment type="catalytic activity">
    <reaction evidence="2">
        <text>a C21-steroid + reduced [NADPH--hemoprotein reductase] + O2 = a 17alpha-hydroxy-C21-steroid + oxidized [NADPH--hemoprotein reductase] + H2O + H(+)</text>
        <dbReference type="Rhea" id="RHEA:65760"/>
        <dbReference type="Rhea" id="RHEA-COMP:11964"/>
        <dbReference type="Rhea" id="RHEA-COMP:11965"/>
        <dbReference type="ChEBI" id="CHEBI:15377"/>
        <dbReference type="ChEBI" id="CHEBI:15378"/>
        <dbReference type="ChEBI" id="CHEBI:15379"/>
        <dbReference type="ChEBI" id="CHEBI:57618"/>
        <dbReference type="ChEBI" id="CHEBI:58210"/>
        <dbReference type="ChEBI" id="CHEBI:61313"/>
        <dbReference type="ChEBI" id="CHEBI:138141"/>
        <dbReference type="EC" id="1.14.14.19"/>
    </reaction>
    <physiologicalReaction direction="left-to-right" evidence="2">
        <dbReference type="Rhea" id="RHEA:65761"/>
    </physiologicalReaction>
</comment>
<comment type="catalytic activity">
    <reaction evidence="2">
        <text>progesterone + reduced [NADPH--hemoprotein reductase] + O2 = 17alpha-hydroxyprogesterone + oxidized [NADPH--hemoprotein reductase] + H2O + H(+)</text>
        <dbReference type="Rhea" id="RHEA:46308"/>
        <dbReference type="Rhea" id="RHEA-COMP:11964"/>
        <dbReference type="Rhea" id="RHEA-COMP:11965"/>
        <dbReference type="ChEBI" id="CHEBI:15377"/>
        <dbReference type="ChEBI" id="CHEBI:15378"/>
        <dbReference type="ChEBI" id="CHEBI:15379"/>
        <dbReference type="ChEBI" id="CHEBI:17026"/>
        <dbReference type="ChEBI" id="CHEBI:17252"/>
        <dbReference type="ChEBI" id="CHEBI:57618"/>
        <dbReference type="ChEBI" id="CHEBI:58210"/>
        <dbReference type="EC" id="1.14.14.19"/>
    </reaction>
    <physiologicalReaction direction="left-to-right" evidence="2">
        <dbReference type="Rhea" id="RHEA:46309"/>
    </physiologicalReaction>
</comment>
<comment type="catalytic activity">
    <reaction evidence="2">
        <text>pregnenolone + reduced [NADPH--hemoprotein reductase] + O2 = 17alpha-hydroxypregnenolone + oxidized [NADPH--hemoprotein reductase] + H2O + H(+)</text>
        <dbReference type="Rhea" id="RHEA:50236"/>
        <dbReference type="Rhea" id="RHEA-COMP:11964"/>
        <dbReference type="Rhea" id="RHEA-COMP:11965"/>
        <dbReference type="ChEBI" id="CHEBI:15377"/>
        <dbReference type="ChEBI" id="CHEBI:15378"/>
        <dbReference type="ChEBI" id="CHEBI:15379"/>
        <dbReference type="ChEBI" id="CHEBI:16581"/>
        <dbReference type="ChEBI" id="CHEBI:28750"/>
        <dbReference type="ChEBI" id="CHEBI:57618"/>
        <dbReference type="ChEBI" id="CHEBI:58210"/>
        <dbReference type="EC" id="1.14.14.19"/>
    </reaction>
    <physiologicalReaction direction="left-to-right" evidence="2">
        <dbReference type="Rhea" id="RHEA:50237"/>
    </physiologicalReaction>
</comment>
<comment type="catalytic activity">
    <reaction evidence="2">
        <text>17alpha-hydroxyprogesterone + reduced [NADPH--hemoprotein reductase] + O2 = androst-4-ene-3,17-dione + acetate + oxidized [NADPH--hemoprotein reductase] + H2O + 2 H(+)</text>
        <dbReference type="Rhea" id="RHEA:14753"/>
        <dbReference type="Rhea" id="RHEA-COMP:11964"/>
        <dbReference type="Rhea" id="RHEA-COMP:11965"/>
        <dbReference type="ChEBI" id="CHEBI:15377"/>
        <dbReference type="ChEBI" id="CHEBI:15378"/>
        <dbReference type="ChEBI" id="CHEBI:15379"/>
        <dbReference type="ChEBI" id="CHEBI:16422"/>
        <dbReference type="ChEBI" id="CHEBI:17252"/>
        <dbReference type="ChEBI" id="CHEBI:30089"/>
        <dbReference type="ChEBI" id="CHEBI:57618"/>
        <dbReference type="ChEBI" id="CHEBI:58210"/>
        <dbReference type="EC" id="1.14.14.32"/>
    </reaction>
    <physiologicalReaction direction="left-to-right" evidence="2">
        <dbReference type="Rhea" id="RHEA:14754"/>
    </physiologicalReaction>
</comment>
<comment type="catalytic activity">
    <reaction evidence="2">
        <text>17alpha-hydroxyprogesterone + reduced [NADPH--hemoprotein reductase] + O2 = 16alpha,17alpha-dihydroxyprogesterone + oxidized [NADPH--hemoprotein reductase] + H2O + H(+)</text>
        <dbReference type="Rhea" id="RHEA:53216"/>
        <dbReference type="Rhea" id="RHEA-COMP:11964"/>
        <dbReference type="Rhea" id="RHEA-COMP:11965"/>
        <dbReference type="ChEBI" id="CHEBI:763"/>
        <dbReference type="ChEBI" id="CHEBI:15377"/>
        <dbReference type="ChEBI" id="CHEBI:15378"/>
        <dbReference type="ChEBI" id="CHEBI:15379"/>
        <dbReference type="ChEBI" id="CHEBI:17252"/>
        <dbReference type="ChEBI" id="CHEBI:57618"/>
        <dbReference type="ChEBI" id="CHEBI:58210"/>
    </reaction>
    <physiologicalReaction direction="left-to-right" evidence="2">
        <dbReference type="Rhea" id="RHEA:53217"/>
    </physiologicalReaction>
</comment>
<comment type="catalytic activity">
    <reaction evidence="2">
        <text>16alpha,17alpha-dihydroxyprogesterone + reduced [NADPH--hemoprotein reductase] + O2 = 6beta,16alpha,17alpha-trihydroxyprogesterone + oxidized [NADPH--hemoprotein reductase] + H2O + H(+)</text>
        <dbReference type="Rhea" id="RHEA:53220"/>
        <dbReference type="Rhea" id="RHEA-COMP:11964"/>
        <dbReference type="Rhea" id="RHEA-COMP:11965"/>
        <dbReference type="ChEBI" id="CHEBI:763"/>
        <dbReference type="ChEBI" id="CHEBI:15377"/>
        <dbReference type="ChEBI" id="CHEBI:15378"/>
        <dbReference type="ChEBI" id="CHEBI:15379"/>
        <dbReference type="ChEBI" id="CHEBI:57618"/>
        <dbReference type="ChEBI" id="CHEBI:58210"/>
        <dbReference type="ChEBI" id="CHEBI:137046"/>
    </reaction>
    <physiologicalReaction direction="left-to-right" evidence="2">
        <dbReference type="Rhea" id="RHEA:53221"/>
    </physiologicalReaction>
</comment>
<comment type="catalytic activity">
    <reaction evidence="2">
        <text>17alpha-hydroxypregnenolone + reduced [NADPH--hemoprotein reductase] + O2 = 3beta-hydroxyandrost-5-en-17-one + acetate + oxidized [NADPH--hemoprotein reductase] + H2O + 2 H(+)</text>
        <dbReference type="Rhea" id="RHEA:50244"/>
        <dbReference type="Rhea" id="RHEA-COMP:11964"/>
        <dbReference type="Rhea" id="RHEA-COMP:11965"/>
        <dbReference type="ChEBI" id="CHEBI:15377"/>
        <dbReference type="ChEBI" id="CHEBI:15378"/>
        <dbReference type="ChEBI" id="CHEBI:15379"/>
        <dbReference type="ChEBI" id="CHEBI:28689"/>
        <dbReference type="ChEBI" id="CHEBI:28750"/>
        <dbReference type="ChEBI" id="CHEBI:30089"/>
        <dbReference type="ChEBI" id="CHEBI:57618"/>
        <dbReference type="ChEBI" id="CHEBI:58210"/>
        <dbReference type="EC" id="1.14.14.32"/>
    </reaction>
    <physiologicalReaction direction="left-to-right" evidence="2">
        <dbReference type="Rhea" id="RHEA:50245"/>
    </physiologicalReaction>
</comment>
<comment type="catalytic activity">
    <reaction evidence="2">
        <text>16alpha,17alpha-dihydroxypregnenolone + reduced [NADPH--hemoprotein reductase] + O2 = 3beta,16alpha-dihydroxy-androst-5-en-17-one + acetate + oxidized [NADPH--hemoprotein reductase] + H2O + 2 H(+)</text>
        <dbReference type="Rhea" id="RHEA:53224"/>
        <dbReference type="Rhea" id="RHEA-COMP:11964"/>
        <dbReference type="Rhea" id="RHEA-COMP:11965"/>
        <dbReference type="ChEBI" id="CHEBI:15377"/>
        <dbReference type="ChEBI" id="CHEBI:15378"/>
        <dbReference type="ChEBI" id="CHEBI:15379"/>
        <dbReference type="ChEBI" id="CHEBI:27771"/>
        <dbReference type="ChEBI" id="CHEBI:30089"/>
        <dbReference type="ChEBI" id="CHEBI:57618"/>
        <dbReference type="ChEBI" id="CHEBI:58210"/>
        <dbReference type="ChEBI" id="CHEBI:137049"/>
    </reaction>
    <physiologicalReaction direction="left-to-right" evidence="2">
        <dbReference type="Rhea" id="RHEA:53225"/>
    </physiologicalReaction>
</comment>
<comment type="catalytic activity">
    <reaction evidence="2">
        <text>3beta-hydroxyandrost-5-en-17-one + reduced [NADPH--hemoprotein reductase] + O2 = 3beta,16alpha-dihydroxy-androst-5-en-17-one + oxidized [NADPH--hemoprotein reductase] + H2O + H(+)</text>
        <dbReference type="Rhea" id="RHEA:47220"/>
        <dbReference type="Rhea" id="RHEA-COMP:11964"/>
        <dbReference type="Rhea" id="RHEA-COMP:11965"/>
        <dbReference type="ChEBI" id="CHEBI:15377"/>
        <dbReference type="ChEBI" id="CHEBI:15378"/>
        <dbReference type="ChEBI" id="CHEBI:15379"/>
        <dbReference type="ChEBI" id="CHEBI:27771"/>
        <dbReference type="ChEBI" id="CHEBI:28689"/>
        <dbReference type="ChEBI" id="CHEBI:57618"/>
        <dbReference type="ChEBI" id="CHEBI:58210"/>
    </reaction>
    <physiologicalReaction direction="left-to-right" evidence="2">
        <dbReference type="Rhea" id="RHEA:47221"/>
    </physiologicalReaction>
</comment>
<comment type="catalytic activity">
    <reaction evidence="2">
        <text>androst-4-ene-3,17-dione + reduced [NADPH--hemoprotein reductase] + O2 = 16alpha-hydroxyandrost-4-ene-3,17-dione + oxidized [NADPH--hemoprotein reductase] + H2O + H(+)</text>
        <dbReference type="Rhea" id="RHEA:53228"/>
        <dbReference type="Rhea" id="RHEA-COMP:11964"/>
        <dbReference type="Rhea" id="RHEA-COMP:11965"/>
        <dbReference type="ChEBI" id="CHEBI:15377"/>
        <dbReference type="ChEBI" id="CHEBI:15378"/>
        <dbReference type="ChEBI" id="CHEBI:15379"/>
        <dbReference type="ChEBI" id="CHEBI:16422"/>
        <dbReference type="ChEBI" id="CHEBI:27582"/>
        <dbReference type="ChEBI" id="CHEBI:57618"/>
        <dbReference type="ChEBI" id="CHEBI:58210"/>
    </reaction>
    <physiologicalReaction direction="left-to-right" evidence="2">
        <dbReference type="Rhea" id="RHEA:53229"/>
    </physiologicalReaction>
</comment>
<comment type="cofactor">
    <cofactor evidence="2">
        <name>heme</name>
        <dbReference type="ChEBI" id="CHEBI:30413"/>
    </cofactor>
</comment>
<comment type="activity regulation">
    <text evidence="2">Regulated predominantly by intracellular cAMP levels. The 17,20-lyase activity is stimulated by cytochrome b5, which acts as an allosteric effector increasing the Vmax of the lyase activity.</text>
</comment>
<comment type="pathway">
    <text evidence="2">Steroid hormone biosynthesis.</text>
</comment>
<comment type="pathway">
    <text evidence="2">Steroid biosynthesis; glucocorticoid biosynthesis.</text>
</comment>
<comment type="subcellular location">
    <subcellularLocation>
        <location evidence="2">Endoplasmic reticulum membrane</location>
    </subcellularLocation>
    <subcellularLocation>
        <location evidence="2">Microsome membrane</location>
    </subcellularLocation>
</comment>
<comment type="similarity">
    <text evidence="3">Belongs to the cytochrome P450 family.</text>
</comment>
<sequence length="509" mass="57247">MWLLLAVFLLTLAYLFWPKTKHSGAKYPRSLPSLPLVGSLPFLPRRGQQHKNFFKLQEKYGPIYSFRLGSKTTVMIGHHQLAREVLLKKGKEFSGRPKVATLDILSDNQKGIAFADHGAHWQLHRKLALNAFALFKDGNLKLEKIINQEANVLCDFLATQHGEAIDLSEPLSLAVTNIISFICFNFSFKNEDPALKAIQNVNDGILEVLSKEVLLDIFPVLKIFPSKAMEKMKGYVQTRNELLNEILEKCQENFSSDSITNLLHILIQAKVNADNNNAGPDQDSKLLSSRHMLATIGDIFGAGVETTTSVIKWIVAYLLHHPSLKKRIQDDIDQIIGFNRTPAISDRNRLVLLEATIREVLRIRPVAPTLIPHKAVIDSSIGDLTIDKGTDVVVNLWALHHSEKEWQHPDLFMPERFLDPTGTQLISPSLSYLPFGAGPRSCVGEMLARQELFLFMSRLLQRFNLEIPDDGKLPSLEGHASLVLQIKPFKVKIEVRQAWKEAQAEGSTP</sequence>